<name>DDL_YERPG</name>
<sequence length="306" mass="33150">MAEKVAVLLGGTSAEREVSLLSGQAVLAGLKEAGIDAYGVDTKDFPVTQLKEQGFDKVFIALHGRGGEDGTLQGVLEFLQLPYTGSGVMASALTMDKLRTKLVWQALGLPISPYVALNRQQFETLSPEELVACVAKLGLPLIVKPSHEGSSVGMSKVDHASELQKALVEAFQHDSDVLIEKWLSGPEFTVAILGDEVLPSIRIQPPGVFYDYDAKYLSDKTQYFCPSGLSDESEQQLAALALQAYHALDCSGWGRVDVMQDRDGHFYLLEVNTSPGMTSHSLVPMAARQYGLSFSQLVARILMLAD</sequence>
<gene>
    <name evidence="2" type="primary">ddl</name>
    <name type="ordered locus">YpAngola_A2916</name>
</gene>
<reference key="1">
    <citation type="journal article" date="2010" name="J. Bacteriol.">
        <title>Genome sequence of the deep-rooted Yersinia pestis strain Angola reveals new insights into the evolution and pangenome of the plague bacterium.</title>
        <authorList>
            <person name="Eppinger M."/>
            <person name="Worsham P.L."/>
            <person name="Nikolich M.P."/>
            <person name="Riley D.R."/>
            <person name="Sebastian Y."/>
            <person name="Mou S."/>
            <person name="Achtman M."/>
            <person name="Lindler L.E."/>
            <person name="Ravel J."/>
        </authorList>
    </citation>
    <scope>NUCLEOTIDE SEQUENCE [LARGE SCALE GENOMIC DNA]</scope>
    <source>
        <strain>Angola</strain>
    </source>
</reference>
<organism>
    <name type="scientific">Yersinia pestis bv. Antiqua (strain Angola)</name>
    <dbReference type="NCBI Taxonomy" id="349746"/>
    <lineage>
        <taxon>Bacteria</taxon>
        <taxon>Pseudomonadati</taxon>
        <taxon>Pseudomonadota</taxon>
        <taxon>Gammaproteobacteria</taxon>
        <taxon>Enterobacterales</taxon>
        <taxon>Yersiniaceae</taxon>
        <taxon>Yersinia</taxon>
    </lineage>
</organism>
<accession>A9R122</accession>
<keyword id="KW-0067">ATP-binding</keyword>
<keyword id="KW-0133">Cell shape</keyword>
<keyword id="KW-0961">Cell wall biogenesis/degradation</keyword>
<keyword id="KW-0963">Cytoplasm</keyword>
<keyword id="KW-0436">Ligase</keyword>
<keyword id="KW-0460">Magnesium</keyword>
<keyword id="KW-0464">Manganese</keyword>
<keyword id="KW-0479">Metal-binding</keyword>
<keyword id="KW-0547">Nucleotide-binding</keyword>
<keyword id="KW-0573">Peptidoglycan synthesis</keyword>
<proteinExistence type="inferred from homology"/>
<evidence type="ECO:0000250" key="1"/>
<evidence type="ECO:0000255" key="2">
    <source>
        <dbReference type="HAMAP-Rule" id="MF_00047"/>
    </source>
</evidence>
<comment type="function">
    <text evidence="2">Cell wall formation.</text>
</comment>
<comment type="catalytic activity">
    <reaction evidence="2">
        <text>2 D-alanine + ATP = D-alanyl-D-alanine + ADP + phosphate + H(+)</text>
        <dbReference type="Rhea" id="RHEA:11224"/>
        <dbReference type="ChEBI" id="CHEBI:15378"/>
        <dbReference type="ChEBI" id="CHEBI:30616"/>
        <dbReference type="ChEBI" id="CHEBI:43474"/>
        <dbReference type="ChEBI" id="CHEBI:57416"/>
        <dbReference type="ChEBI" id="CHEBI:57822"/>
        <dbReference type="ChEBI" id="CHEBI:456216"/>
        <dbReference type="EC" id="6.3.2.4"/>
    </reaction>
</comment>
<comment type="cofactor">
    <cofactor evidence="1">
        <name>Mg(2+)</name>
        <dbReference type="ChEBI" id="CHEBI:18420"/>
    </cofactor>
    <cofactor evidence="1">
        <name>Mn(2+)</name>
        <dbReference type="ChEBI" id="CHEBI:29035"/>
    </cofactor>
    <text evidence="1">Binds 2 magnesium or manganese ions per subunit.</text>
</comment>
<comment type="pathway">
    <text evidence="2">Cell wall biogenesis; peptidoglycan biosynthesis.</text>
</comment>
<comment type="subcellular location">
    <subcellularLocation>
        <location evidence="2">Cytoplasm</location>
    </subcellularLocation>
</comment>
<comment type="similarity">
    <text evidence="2">Belongs to the D-alanine--D-alanine ligase family.</text>
</comment>
<feature type="chain" id="PRO_1000091218" description="D-alanine--D-alanine ligase">
    <location>
        <begin position="1"/>
        <end position="306"/>
    </location>
</feature>
<feature type="domain" description="ATP-grasp" evidence="2">
    <location>
        <begin position="101"/>
        <end position="303"/>
    </location>
</feature>
<feature type="binding site" evidence="2">
    <location>
        <begin position="134"/>
        <end position="189"/>
    </location>
    <ligand>
        <name>ATP</name>
        <dbReference type="ChEBI" id="CHEBI:30616"/>
    </ligand>
</feature>
<feature type="binding site" evidence="2">
    <location>
        <position position="257"/>
    </location>
    <ligand>
        <name>Mg(2+)</name>
        <dbReference type="ChEBI" id="CHEBI:18420"/>
        <label>1</label>
    </ligand>
</feature>
<feature type="binding site" evidence="2">
    <location>
        <position position="270"/>
    </location>
    <ligand>
        <name>Mg(2+)</name>
        <dbReference type="ChEBI" id="CHEBI:18420"/>
        <label>1</label>
    </ligand>
</feature>
<feature type="binding site" evidence="2">
    <location>
        <position position="270"/>
    </location>
    <ligand>
        <name>Mg(2+)</name>
        <dbReference type="ChEBI" id="CHEBI:18420"/>
        <label>2</label>
    </ligand>
</feature>
<feature type="binding site" evidence="2">
    <location>
        <position position="272"/>
    </location>
    <ligand>
        <name>Mg(2+)</name>
        <dbReference type="ChEBI" id="CHEBI:18420"/>
        <label>2</label>
    </ligand>
</feature>
<dbReference type="EC" id="6.3.2.4" evidence="2"/>
<dbReference type="EMBL" id="CP000901">
    <property type="protein sequence ID" value="ABX88319.1"/>
    <property type="molecule type" value="Genomic_DNA"/>
</dbReference>
<dbReference type="RefSeq" id="WP_002210432.1">
    <property type="nucleotide sequence ID" value="NZ_CP009935.1"/>
</dbReference>
<dbReference type="SMR" id="A9R122"/>
<dbReference type="KEGG" id="ypg:YpAngola_A2916"/>
<dbReference type="PATRIC" id="fig|349746.12.peg.3959"/>
<dbReference type="UniPathway" id="UPA00219"/>
<dbReference type="GO" id="GO:0005829">
    <property type="term" value="C:cytosol"/>
    <property type="evidence" value="ECO:0007669"/>
    <property type="project" value="TreeGrafter"/>
</dbReference>
<dbReference type="GO" id="GO:0005524">
    <property type="term" value="F:ATP binding"/>
    <property type="evidence" value="ECO:0007669"/>
    <property type="project" value="UniProtKB-KW"/>
</dbReference>
<dbReference type="GO" id="GO:0008716">
    <property type="term" value="F:D-alanine-D-alanine ligase activity"/>
    <property type="evidence" value="ECO:0007669"/>
    <property type="project" value="UniProtKB-UniRule"/>
</dbReference>
<dbReference type="GO" id="GO:0046872">
    <property type="term" value="F:metal ion binding"/>
    <property type="evidence" value="ECO:0007669"/>
    <property type="project" value="UniProtKB-KW"/>
</dbReference>
<dbReference type="GO" id="GO:0071555">
    <property type="term" value="P:cell wall organization"/>
    <property type="evidence" value="ECO:0007669"/>
    <property type="project" value="UniProtKB-KW"/>
</dbReference>
<dbReference type="GO" id="GO:0009252">
    <property type="term" value="P:peptidoglycan biosynthetic process"/>
    <property type="evidence" value="ECO:0007669"/>
    <property type="project" value="UniProtKB-UniRule"/>
</dbReference>
<dbReference type="GO" id="GO:0008360">
    <property type="term" value="P:regulation of cell shape"/>
    <property type="evidence" value="ECO:0007669"/>
    <property type="project" value="UniProtKB-KW"/>
</dbReference>
<dbReference type="FunFam" id="3.30.1490.20:FF:000007">
    <property type="entry name" value="D-alanine--D-alanine ligase"/>
    <property type="match status" value="1"/>
</dbReference>
<dbReference type="FunFam" id="3.30.470.20:FF:000008">
    <property type="entry name" value="D-alanine--D-alanine ligase"/>
    <property type="match status" value="1"/>
</dbReference>
<dbReference type="FunFam" id="3.40.50.20:FF:000013">
    <property type="entry name" value="D-alanine--D-alanine ligase"/>
    <property type="match status" value="1"/>
</dbReference>
<dbReference type="Gene3D" id="3.40.50.20">
    <property type="match status" value="1"/>
</dbReference>
<dbReference type="Gene3D" id="3.30.1490.20">
    <property type="entry name" value="ATP-grasp fold, A domain"/>
    <property type="match status" value="1"/>
</dbReference>
<dbReference type="Gene3D" id="3.30.470.20">
    <property type="entry name" value="ATP-grasp fold, B domain"/>
    <property type="match status" value="1"/>
</dbReference>
<dbReference type="HAMAP" id="MF_00047">
    <property type="entry name" value="Dala_Dala_lig"/>
    <property type="match status" value="1"/>
</dbReference>
<dbReference type="InterPro" id="IPR011761">
    <property type="entry name" value="ATP-grasp"/>
</dbReference>
<dbReference type="InterPro" id="IPR013815">
    <property type="entry name" value="ATP_grasp_subdomain_1"/>
</dbReference>
<dbReference type="InterPro" id="IPR000291">
    <property type="entry name" value="D-Ala_lig_Van_CS"/>
</dbReference>
<dbReference type="InterPro" id="IPR005905">
    <property type="entry name" value="D_ala_D_ala"/>
</dbReference>
<dbReference type="InterPro" id="IPR011095">
    <property type="entry name" value="Dala_Dala_lig_C"/>
</dbReference>
<dbReference type="InterPro" id="IPR011127">
    <property type="entry name" value="Dala_Dala_lig_N"/>
</dbReference>
<dbReference type="InterPro" id="IPR016185">
    <property type="entry name" value="PreATP-grasp_dom_sf"/>
</dbReference>
<dbReference type="NCBIfam" id="TIGR01205">
    <property type="entry name" value="D_ala_D_alaTIGR"/>
    <property type="match status" value="1"/>
</dbReference>
<dbReference type="NCBIfam" id="NF002378">
    <property type="entry name" value="PRK01372.1"/>
    <property type="match status" value="1"/>
</dbReference>
<dbReference type="PANTHER" id="PTHR23132">
    <property type="entry name" value="D-ALANINE--D-ALANINE LIGASE"/>
    <property type="match status" value="1"/>
</dbReference>
<dbReference type="PANTHER" id="PTHR23132:SF23">
    <property type="entry name" value="D-ALANINE--D-ALANINE LIGASE B"/>
    <property type="match status" value="1"/>
</dbReference>
<dbReference type="Pfam" id="PF07478">
    <property type="entry name" value="Dala_Dala_lig_C"/>
    <property type="match status" value="1"/>
</dbReference>
<dbReference type="Pfam" id="PF01820">
    <property type="entry name" value="Dala_Dala_lig_N"/>
    <property type="match status" value="1"/>
</dbReference>
<dbReference type="PIRSF" id="PIRSF039102">
    <property type="entry name" value="Ddl/VanB"/>
    <property type="match status" value="1"/>
</dbReference>
<dbReference type="SUPFAM" id="SSF56059">
    <property type="entry name" value="Glutathione synthetase ATP-binding domain-like"/>
    <property type="match status" value="1"/>
</dbReference>
<dbReference type="SUPFAM" id="SSF52440">
    <property type="entry name" value="PreATP-grasp domain"/>
    <property type="match status" value="1"/>
</dbReference>
<dbReference type="PROSITE" id="PS50975">
    <property type="entry name" value="ATP_GRASP"/>
    <property type="match status" value="1"/>
</dbReference>
<dbReference type="PROSITE" id="PS00843">
    <property type="entry name" value="DALA_DALA_LIGASE_1"/>
    <property type="match status" value="1"/>
</dbReference>
<dbReference type="PROSITE" id="PS00844">
    <property type="entry name" value="DALA_DALA_LIGASE_2"/>
    <property type="match status" value="1"/>
</dbReference>
<protein>
    <recommendedName>
        <fullName evidence="2">D-alanine--D-alanine ligase</fullName>
        <ecNumber evidence="2">6.3.2.4</ecNumber>
    </recommendedName>
    <alternativeName>
        <fullName evidence="2">D-Ala-D-Ala ligase</fullName>
    </alternativeName>
    <alternativeName>
        <fullName evidence="2">D-alanylalanine synthetase</fullName>
    </alternativeName>
</protein>